<proteinExistence type="inferred from homology"/>
<protein>
    <recommendedName>
        <fullName evidence="1">Endoribonuclease YbeY</fullName>
        <ecNumber evidence="1">3.1.-.-</ecNumber>
    </recommendedName>
</protein>
<name>YBEY_STRPS</name>
<accession>B2IPC1</accession>
<gene>
    <name evidence="1" type="primary">ybeY</name>
    <name type="ordered locus">SPCG_0943</name>
</gene>
<sequence>MYIEMVDETGQVSKEMLQQTQEILEFAAQKLGKEDKEMAVTFVTNERSHELNLEYRNTDRPTDVISLEYKPELEIAFDEEDLLENSELAEMMSEFDAYIGELFISIDKAHEQAEEYGHSFEREMGFLAVHGFLHINGYDHYTPEEEAEMFGLQEEILTAYGLTRQ</sequence>
<evidence type="ECO:0000255" key="1">
    <source>
        <dbReference type="HAMAP-Rule" id="MF_00009"/>
    </source>
</evidence>
<reference key="1">
    <citation type="journal article" date="2009" name="BMC Genomics">
        <title>Genome evolution driven by host adaptations results in a more virulent and antimicrobial-resistant Streptococcus pneumoniae serotype 14.</title>
        <authorList>
            <person name="Ding F."/>
            <person name="Tang P."/>
            <person name="Hsu M.-H."/>
            <person name="Cui P."/>
            <person name="Hu S."/>
            <person name="Yu J."/>
            <person name="Chiu C.-H."/>
        </authorList>
    </citation>
    <scope>NUCLEOTIDE SEQUENCE [LARGE SCALE GENOMIC DNA]</scope>
    <source>
        <strain>CGSP14</strain>
    </source>
</reference>
<keyword id="KW-0963">Cytoplasm</keyword>
<keyword id="KW-0255">Endonuclease</keyword>
<keyword id="KW-0378">Hydrolase</keyword>
<keyword id="KW-0479">Metal-binding</keyword>
<keyword id="KW-0540">Nuclease</keyword>
<keyword id="KW-0690">Ribosome biogenesis</keyword>
<keyword id="KW-0698">rRNA processing</keyword>
<keyword id="KW-0862">Zinc</keyword>
<feature type="chain" id="PRO_1000089217" description="Endoribonuclease YbeY">
    <location>
        <begin position="1"/>
        <end position="165"/>
    </location>
</feature>
<feature type="binding site" evidence="1">
    <location>
        <position position="130"/>
    </location>
    <ligand>
        <name>Zn(2+)</name>
        <dbReference type="ChEBI" id="CHEBI:29105"/>
        <note>catalytic</note>
    </ligand>
</feature>
<feature type="binding site" evidence="1">
    <location>
        <position position="134"/>
    </location>
    <ligand>
        <name>Zn(2+)</name>
        <dbReference type="ChEBI" id="CHEBI:29105"/>
        <note>catalytic</note>
    </ligand>
</feature>
<feature type="binding site" evidence="1">
    <location>
        <position position="140"/>
    </location>
    <ligand>
        <name>Zn(2+)</name>
        <dbReference type="ChEBI" id="CHEBI:29105"/>
        <note>catalytic</note>
    </ligand>
</feature>
<organism>
    <name type="scientific">Streptococcus pneumoniae (strain CGSP14)</name>
    <dbReference type="NCBI Taxonomy" id="516950"/>
    <lineage>
        <taxon>Bacteria</taxon>
        <taxon>Bacillati</taxon>
        <taxon>Bacillota</taxon>
        <taxon>Bacilli</taxon>
        <taxon>Lactobacillales</taxon>
        <taxon>Streptococcaceae</taxon>
        <taxon>Streptococcus</taxon>
    </lineage>
</organism>
<comment type="function">
    <text evidence="1">Single strand-specific metallo-endoribonuclease involved in late-stage 70S ribosome quality control and in maturation of the 3' terminus of the 16S rRNA.</text>
</comment>
<comment type="cofactor">
    <cofactor evidence="1">
        <name>Zn(2+)</name>
        <dbReference type="ChEBI" id="CHEBI:29105"/>
    </cofactor>
    <text evidence="1">Binds 1 zinc ion.</text>
</comment>
<comment type="subcellular location">
    <subcellularLocation>
        <location evidence="1">Cytoplasm</location>
    </subcellularLocation>
</comment>
<comment type="similarity">
    <text evidence="1">Belongs to the endoribonuclease YbeY family.</text>
</comment>
<dbReference type="EC" id="3.1.-.-" evidence="1"/>
<dbReference type="EMBL" id="CP001033">
    <property type="protein sequence ID" value="ACB90195.1"/>
    <property type="molecule type" value="Genomic_DNA"/>
</dbReference>
<dbReference type="RefSeq" id="WP_000275161.1">
    <property type="nucleotide sequence ID" value="NC_010582.1"/>
</dbReference>
<dbReference type="SMR" id="B2IPC1"/>
<dbReference type="KEGG" id="spw:SPCG_0943"/>
<dbReference type="HOGENOM" id="CLU_106710_3_0_9"/>
<dbReference type="GO" id="GO:0005737">
    <property type="term" value="C:cytoplasm"/>
    <property type="evidence" value="ECO:0007669"/>
    <property type="project" value="UniProtKB-SubCell"/>
</dbReference>
<dbReference type="GO" id="GO:0004222">
    <property type="term" value="F:metalloendopeptidase activity"/>
    <property type="evidence" value="ECO:0007669"/>
    <property type="project" value="InterPro"/>
</dbReference>
<dbReference type="GO" id="GO:0004521">
    <property type="term" value="F:RNA endonuclease activity"/>
    <property type="evidence" value="ECO:0007669"/>
    <property type="project" value="UniProtKB-UniRule"/>
</dbReference>
<dbReference type="GO" id="GO:0008270">
    <property type="term" value="F:zinc ion binding"/>
    <property type="evidence" value="ECO:0007669"/>
    <property type="project" value="UniProtKB-UniRule"/>
</dbReference>
<dbReference type="GO" id="GO:0006364">
    <property type="term" value="P:rRNA processing"/>
    <property type="evidence" value="ECO:0007669"/>
    <property type="project" value="UniProtKB-UniRule"/>
</dbReference>
<dbReference type="Gene3D" id="3.40.390.30">
    <property type="entry name" value="Metalloproteases ('zincins'), catalytic domain"/>
    <property type="match status" value="1"/>
</dbReference>
<dbReference type="HAMAP" id="MF_00009">
    <property type="entry name" value="Endoribonucl_YbeY"/>
    <property type="match status" value="1"/>
</dbReference>
<dbReference type="InterPro" id="IPR023091">
    <property type="entry name" value="MetalPrtase_cat_dom_sf_prd"/>
</dbReference>
<dbReference type="InterPro" id="IPR002036">
    <property type="entry name" value="YbeY"/>
</dbReference>
<dbReference type="InterPro" id="IPR020549">
    <property type="entry name" value="YbeY_CS"/>
</dbReference>
<dbReference type="NCBIfam" id="TIGR00043">
    <property type="entry name" value="rRNA maturation RNase YbeY"/>
    <property type="match status" value="1"/>
</dbReference>
<dbReference type="PANTHER" id="PTHR46986">
    <property type="entry name" value="ENDORIBONUCLEASE YBEY, CHLOROPLASTIC"/>
    <property type="match status" value="1"/>
</dbReference>
<dbReference type="PANTHER" id="PTHR46986:SF1">
    <property type="entry name" value="ENDORIBONUCLEASE YBEY, CHLOROPLASTIC"/>
    <property type="match status" value="1"/>
</dbReference>
<dbReference type="Pfam" id="PF02130">
    <property type="entry name" value="YbeY"/>
    <property type="match status" value="1"/>
</dbReference>
<dbReference type="SUPFAM" id="SSF55486">
    <property type="entry name" value="Metalloproteases ('zincins'), catalytic domain"/>
    <property type="match status" value="1"/>
</dbReference>
<dbReference type="PROSITE" id="PS01306">
    <property type="entry name" value="UPF0054"/>
    <property type="match status" value="1"/>
</dbReference>